<sequence length="303" mass="33580">MSDNILVLGAGELGTAILEALAKHPSRANAKLSVLLRPSSINSTAPEKKKQIEHLQGLGITPQPGDVESSTSELAAIFRNYDTIISCNGMGRPFGTQTKLADAVFEAGVKRYFPWQFGMDYDAIGTGSDQDRFDEQINIRKKLRAQNKTEWTIVSTGLFMSFLFLTDFGVINLEQKVTRGLGTWDTKITVTVPRDIGRVTADIVFDPRGIANEVVHIAGDTLSYKEIADLVDERFGEGTFRRELWDMETLKKQLAEGRPVAEYKATFAVGKGVAWDREGTVNMARGIQMTGLREYLKDVNLVK</sequence>
<comment type="function">
    <text evidence="3 4 5 6 9">NmrA-like family domain-containing oxidoreductase; part of the Fusarium detoxification of benzoxazolinone cluster 1 (FDB1) involved in the degradation of benzoxazolinones produced by the host plant (PubMed:19302487, PubMed:26808652). Maize, wheat, and rye produce the 2 benzoxazinone phytoanticipins 2,4-dihy-droxy-7-methoxy-1,4-benzoxazin-3-one (DIMBOA) and 2,4-dihydroxy-1,4-benzoxazin-3-one (DIBOA) that, due to their inherent instability once released, spontaneously degrade to the more stable corresponding benzoxazolinones, 6-methoxy-2-benzoxazolinone (MBOA) and 2-benzoxazolinone (BOA), respectively (PubMed:11876429). The first step in the detoxification of benzoxazolinones involves the hydrolysis of the cyclic ester bond of benzoxazolinones by the FDB1 cluster gamma-lactamase MBL1 to aminophenols (PubMed:12788712, PubMed:26808652). MBL1 is able to convert BOA into 2-aminophenol (2-AP), as well as MBOA into 5-methoxy-2-aminophenol (2-AMP) (PubMed:12788712, PubMed:26808652). The FDB2 cluster N-malonyltransferase FDB2/NAT1 then metabolizes aminophenols via N-malonylation to non-toxic malonamic acids (PubMed:12788712, PubMed:19302487). FDB2/NAT1 converts 2-AP into N-(2-hydroxyphenyl) malonamic acid (HPMA) and 2-AMP into N-(2-hydroxy-4-methoxyphenyl) malonamic acid (HMPMA) (PubMed:12788712, PubMed:19302487). The duplicated dienlactone hydrolases DLH1 and DLH2 may provide redundant function for hydrolyzing the lactone moiety in the BOA molecule (Probable). The roles of the amidases an other enzymes encoded by the 2 FDB clusters have not been identified so far (Probable).</text>
</comment>
<comment type="induction">
    <text evidence="6">Expression is induced in response to 2-benzoxasolinone (BOA) exposure.</text>
</comment>
<comment type="miscellaneous">
    <text evidence="9">Fusarium verticillioides possesses 2 unlinked loci, FDB1 and FDB2, necessary for detoxification of antimicrobial compounds produced by maize, including 2-benzoxazolinone (BOA) (Probable). The FDB2 cluster arose as a duplication of the FDB1 cluster with rearrangement and expansion by incorporating additional genes (Probable).</text>
</comment>
<comment type="similarity">
    <text evidence="8">Belongs to the NmrA-type oxidoreductase family.</text>
</comment>
<name>FDB87_GIBM7</name>
<gene>
    <name type="ORF">FVEG_08287</name>
</gene>
<proteinExistence type="evidence at transcript level"/>
<dbReference type="EC" id="1.-.-.-" evidence="9"/>
<dbReference type="EMBL" id="CM000587">
    <property type="protein sequence ID" value="EWG48576.1"/>
    <property type="molecule type" value="Genomic_DNA"/>
</dbReference>
<dbReference type="RefSeq" id="XP_018754767.1">
    <property type="nucleotide sequence ID" value="XM_018897181.1"/>
</dbReference>
<dbReference type="SMR" id="W7MC44"/>
<dbReference type="EnsemblFungi" id="FVEG_08287T0">
    <property type="protein sequence ID" value="FVEG_08287T0"/>
    <property type="gene ID" value="FVEG_08287"/>
</dbReference>
<dbReference type="GeneID" id="30066031"/>
<dbReference type="KEGG" id="fvr:FVEG_08287"/>
<dbReference type="VEuPathDB" id="FungiDB:FVEG_08287"/>
<dbReference type="eggNOG" id="ENOG502QPPB">
    <property type="taxonomic scope" value="Eukaryota"/>
</dbReference>
<dbReference type="HOGENOM" id="CLU_059949_0_0_1"/>
<dbReference type="OMA" id="QHETEWV"/>
<dbReference type="OrthoDB" id="19443at110618"/>
<dbReference type="Proteomes" id="UP000009096">
    <property type="component" value="Chromosome 10"/>
</dbReference>
<dbReference type="GO" id="GO:0016491">
    <property type="term" value="F:oxidoreductase activity"/>
    <property type="evidence" value="ECO:0007669"/>
    <property type="project" value="UniProtKB-KW"/>
</dbReference>
<dbReference type="CDD" id="cd05259">
    <property type="entry name" value="PCBER_SDR_a"/>
    <property type="match status" value="1"/>
</dbReference>
<dbReference type="Gene3D" id="3.40.50.720">
    <property type="entry name" value="NAD(P)-binding Rossmann-like Domain"/>
    <property type="match status" value="1"/>
</dbReference>
<dbReference type="Gene3D" id="3.90.25.10">
    <property type="entry name" value="UDP-galactose 4-epimerase, domain 1"/>
    <property type="match status" value="1"/>
</dbReference>
<dbReference type="InterPro" id="IPR036291">
    <property type="entry name" value="NAD(P)-bd_dom_sf"/>
</dbReference>
<dbReference type="InterPro" id="IPR008030">
    <property type="entry name" value="NmrA-like"/>
</dbReference>
<dbReference type="InterPro" id="IPR051609">
    <property type="entry name" value="NmrA/Isoflavone_reductase-like"/>
</dbReference>
<dbReference type="InterPro" id="IPR045312">
    <property type="entry name" value="PCBER-like"/>
</dbReference>
<dbReference type="PANTHER" id="PTHR47706">
    <property type="entry name" value="NMRA-LIKE FAMILY PROTEIN"/>
    <property type="match status" value="1"/>
</dbReference>
<dbReference type="PANTHER" id="PTHR47706:SF6">
    <property type="entry name" value="NMRA-LIKE FAMILY PROTEIN (AFU_ORTHOLOGUE AFUA_6G00280)"/>
    <property type="match status" value="1"/>
</dbReference>
<dbReference type="Pfam" id="PF05368">
    <property type="entry name" value="NmrA"/>
    <property type="match status" value="1"/>
</dbReference>
<dbReference type="SUPFAM" id="SSF51735">
    <property type="entry name" value="NAD(P)-binding Rossmann-fold domains"/>
    <property type="match status" value="1"/>
</dbReference>
<keyword id="KW-0521">NADP</keyword>
<keyword id="KW-0560">Oxidoreductase</keyword>
<keyword id="KW-1185">Reference proteome</keyword>
<feature type="chain" id="PRO_0000454621" description="NmrA-like family domain-containing oxidoreductase FVEG_08287">
    <location>
        <begin position="1"/>
        <end position="303"/>
    </location>
</feature>
<feature type="binding site" evidence="2">
    <location>
        <begin position="8"/>
        <end position="14"/>
    </location>
    <ligand>
        <name>NADP(+)</name>
        <dbReference type="ChEBI" id="CHEBI:58349"/>
    </ligand>
</feature>
<feature type="binding site" evidence="1">
    <location>
        <begin position="8"/>
        <end position="13"/>
    </location>
    <ligand>
        <name>NADP(+)</name>
        <dbReference type="ChEBI" id="CHEBI:58349"/>
    </ligand>
</feature>
<feature type="binding site" evidence="1">
    <location>
        <begin position="36"/>
        <end position="39"/>
    </location>
    <ligand>
        <name>NADP(+)</name>
        <dbReference type="ChEBI" id="CHEBI:58349"/>
    </ligand>
</feature>
<feature type="binding site" evidence="2">
    <location>
        <position position="37"/>
    </location>
    <ligand>
        <name>NADP(+)</name>
        <dbReference type="ChEBI" id="CHEBI:58349"/>
    </ligand>
</feature>
<feature type="binding site" evidence="1">
    <location>
        <begin position="56"/>
        <end position="57"/>
    </location>
    <ligand>
        <name>NADP(+)</name>
        <dbReference type="ChEBI" id="CHEBI:58349"/>
    </ligand>
</feature>
<feature type="binding site" evidence="1">
    <location>
        <begin position="77"/>
        <end position="79"/>
    </location>
    <ligand>
        <name>NADP(+)</name>
        <dbReference type="ChEBI" id="CHEBI:58349"/>
    </ligand>
</feature>
<feature type="binding site" evidence="1">
    <location>
        <begin position="159"/>
        <end position="162"/>
    </location>
    <ligand>
        <name>NADP(+)</name>
        <dbReference type="ChEBI" id="CHEBI:58349"/>
    </ligand>
</feature>
<evidence type="ECO:0000250" key="1">
    <source>
        <dbReference type="UniProtKB" id="Q9HBL8"/>
    </source>
</evidence>
<evidence type="ECO:0000250" key="2">
    <source>
        <dbReference type="UniProtKB" id="Q9LD14"/>
    </source>
</evidence>
<evidence type="ECO:0000269" key="3">
    <source>
    </source>
</evidence>
<evidence type="ECO:0000269" key="4">
    <source>
    </source>
</evidence>
<evidence type="ECO:0000269" key="5">
    <source>
    </source>
</evidence>
<evidence type="ECO:0000269" key="6">
    <source>
    </source>
</evidence>
<evidence type="ECO:0000303" key="7">
    <source>
    </source>
</evidence>
<evidence type="ECO:0000305" key="8"/>
<evidence type="ECO:0000305" key="9">
    <source>
    </source>
</evidence>
<reference key="1">
    <citation type="journal article" date="2010" name="Nature">
        <title>Comparative genomics reveals mobile pathogenicity chromosomes in Fusarium.</title>
        <authorList>
            <person name="Ma L.-J."/>
            <person name="van der Does H.C."/>
            <person name="Borkovich K.A."/>
            <person name="Coleman J.J."/>
            <person name="Daboussi M.-J."/>
            <person name="Di Pietro A."/>
            <person name="Dufresne M."/>
            <person name="Freitag M."/>
            <person name="Grabherr M."/>
            <person name="Henrissat B."/>
            <person name="Houterman P.M."/>
            <person name="Kang S."/>
            <person name="Shim W.-B."/>
            <person name="Woloshuk C."/>
            <person name="Xie X."/>
            <person name="Xu J.-R."/>
            <person name="Antoniw J."/>
            <person name="Baker S.E."/>
            <person name="Bluhm B.H."/>
            <person name="Breakspear A."/>
            <person name="Brown D.W."/>
            <person name="Butchko R.A.E."/>
            <person name="Chapman S."/>
            <person name="Coulson R."/>
            <person name="Coutinho P.M."/>
            <person name="Danchin E.G.J."/>
            <person name="Diener A."/>
            <person name="Gale L.R."/>
            <person name="Gardiner D.M."/>
            <person name="Goff S."/>
            <person name="Hammond-Kosack K.E."/>
            <person name="Hilburn K."/>
            <person name="Hua-Van A."/>
            <person name="Jonkers W."/>
            <person name="Kazan K."/>
            <person name="Kodira C.D."/>
            <person name="Koehrsen M."/>
            <person name="Kumar L."/>
            <person name="Lee Y.-H."/>
            <person name="Li L."/>
            <person name="Manners J.M."/>
            <person name="Miranda-Saavedra D."/>
            <person name="Mukherjee M."/>
            <person name="Park G."/>
            <person name="Park J."/>
            <person name="Park S.-Y."/>
            <person name="Proctor R.H."/>
            <person name="Regev A."/>
            <person name="Ruiz-Roldan M.C."/>
            <person name="Sain D."/>
            <person name="Sakthikumar S."/>
            <person name="Sykes S."/>
            <person name="Schwartz D.C."/>
            <person name="Turgeon B.G."/>
            <person name="Wapinski I."/>
            <person name="Yoder O."/>
            <person name="Young S."/>
            <person name="Zeng Q."/>
            <person name="Zhou S."/>
            <person name="Galagan J."/>
            <person name="Cuomo C.A."/>
            <person name="Kistler H.C."/>
            <person name="Rep M."/>
        </authorList>
    </citation>
    <scope>NUCLEOTIDE SEQUENCE [LARGE SCALE GENOMIC DNA]</scope>
    <source>
        <strain>M3125 / FGSC 7600</strain>
    </source>
</reference>
<reference key="2">
    <citation type="journal article" date="2002" name="Mol. Plant Microbe Interact.">
        <title>Fdb1 and Fdb2, Fusarium verticillioides loci necessary for detoxification of preformed antimicrobials from corn.</title>
        <authorList>
            <person name="Glenn A.E."/>
            <person name="Gold S.E."/>
            <person name="Bacon C.W."/>
        </authorList>
    </citation>
    <scope>FUNCTION</scope>
</reference>
<reference key="3">
    <citation type="journal article" date="2003" name="Appl. Environ. Microbiol.">
        <title>Identification of intermediate and branch metabolites resulting from biotransformation of 2-benzoxazolinone by Fusarium verticillioides.</title>
        <authorList>
            <person name="Glenn A.E."/>
            <person name="Meredith F.I."/>
            <person name="Morrison W.H. III"/>
            <person name="Bacon C.W."/>
        </authorList>
    </citation>
    <scope>FUNCTION</scope>
</reference>
<reference key="4">
    <citation type="journal article" date="2009" name="J. Appl. Microbiol.">
        <title>FDB2 encodes a member of the arylamine N-acetyltransferase family and is necessary for biotransformation of benzoxazolinones by Fusarium verticillioides.</title>
        <authorList>
            <person name="Glenn A.E."/>
            <person name="Bacon C.W."/>
        </authorList>
    </citation>
    <scope>FUNCTION</scope>
</reference>
<reference key="5">
    <citation type="journal article" date="2016" name="PLoS ONE">
        <title>Two horizontally transferred xenobiotic resistance gene clusters associated with detoxification of benzoxazolinones by Fusarium species.</title>
        <authorList>
            <person name="Glenn A.E."/>
            <person name="Davis C.B."/>
            <person name="Gao M."/>
            <person name="Gold S.E."/>
            <person name="Mitchell T.R."/>
            <person name="Proctor R.H."/>
            <person name="Stewart J.E."/>
            <person name="Snook M.E."/>
        </authorList>
    </citation>
    <scope>FUNCTION</scope>
    <scope>INDUCTION</scope>
</reference>
<organism>
    <name type="scientific">Gibberella moniliformis (strain M3125 / FGSC 7600)</name>
    <name type="common">Maize ear and stalk rot fungus</name>
    <name type="synonym">Fusarium verticillioides</name>
    <dbReference type="NCBI Taxonomy" id="334819"/>
    <lineage>
        <taxon>Eukaryota</taxon>
        <taxon>Fungi</taxon>
        <taxon>Dikarya</taxon>
        <taxon>Ascomycota</taxon>
        <taxon>Pezizomycotina</taxon>
        <taxon>Sordariomycetes</taxon>
        <taxon>Hypocreomycetidae</taxon>
        <taxon>Hypocreales</taxon>
        <taxon>Nectriaceae</taxon>
        <taxon>Fusarium</taxon>
        <taxon>Fusarium fujikuroi species complex</taxon>
    </lineage>
</organism>
<accession>W7MC44</accession>
<protein>
    <recommendedName>
        <fullName evidence="7">NmrA-like family domain-containing oxidoreductase FVEG_08287</fullName>
        <ecNumber evidence="9">1.-.-.-</ecNumber>
    </recommendedName>
    <alternativeName>
        <fullName evidence="7">Fusarium detoxification of benzoxazolinone cluster 1 protein FVEG_08287</fullName>
        <shortName evidence="7">FDB1 cluster protein FVEG_08287</shortName>
    </alternativeName>
</protein>